<name>HTPX_STRP4</name>
<reference key="1">
    <citation type="journal article" date="2001" name="Microb. Drug Resist.">
        <title>Annotated draft genomic sequence from a Streptococcus pneumoniae type 19F clinical isolate.</title>
        <authorList>
            <person name="Dopazo J."/>
            <person name="Mendoza A."/>
            <person name="Herrero J."/>
            <person name="Caldara F."/>
            <person name="Humbert Y."/>
            <person name="Friedli L."/>
            <person name="Guerrier M."/>
            <person name="Grand-Schenk E."/>
            <person name="Gandin C."/>
            <person name="de Francesco M."/>
            <person name="Polissi A."/>
            <person name="Buell G."/>
            <person name="Feger G."/>
            <person name="Garcia E."/>
            <person name="Peitsch M."/>
            <person name="Garcia-Bustos J.F."/>
        </authorList>
    </citation>
    <scope>NUCLEOTIDE SEQUENCE [LARGE SCALE GENOMIC DNA]</scope>
    <source>
        <strain>G54</strain>
    </source>
</reference>
<reference key="2">
    <citation type="submission" date="2008-03" db="EMBL/GenBank/DDBJ databases">
        <title>Pneumococcal beta glucoside metabolism investigated by whole genome comparison.</title>
        <authorList>
            <person name="Mulas L."/>
            <person name="Trappetti C."/>
            <person name="Hakenbeck R."/>
            <person name="Iannelli F."/>
            <person name="Pozzi G."/>
            <person name="Davidsen T.M."/>
            <person name="Tettelin H."/>
            <person name="Oggioni M."/>
        </authorList>
    </citation>
    <scope>NUCLEOTIDE SEQUENCE [LARGE SCALE GENOMIC DNA]</scope>
    <source>
        <strain>G54</strain>
    </source>
</reference>
<dbReference type="EC" id="3.4.24.-" evidence="1"/>
<dbReference type="EMBL" id="CP001015">
    <property type="protein sequence ID" value="ACF56236.1"/>
    <property type="molecule type" value="Genomic_DNA"/>
</dbReference>
<dbReference type="KEGG" id="spx:SPG_1177"/>
<dbReference type="HOGENOM" id="CLU_042266_2_1_9"/>
<dbReference type="GO" id="GO:0005886">
    <property type="term" value="C:plasma membrane"/>
    <property type="evidence" value="ECO:0007669"/>
    <property type="project" value="UniProtKB-SubCell"/>
</dbReference>
<dbReference type="GO" id="GO:0004222">
    <property type="term" value="F:metalloendopeptidase activity"/>
    <property type="evidence" value="ECO:0007669"/>
    <property type="project" value="UniProtKB-UniRule"/>
</dbReference>
<dbReference type="GO" id="GO:0008270">
    <property type="term" value="F:zinc ion binding"/>
    <property type="evidence" value="ECO:0007669"/>
    <property type="project" value="UniProtKB-UniRule"/>
</dbReference>
<dbReference type="GO" id="GO:0006508">
    <property type="term" value="P:proteolysis"/>
    <property type="evidence" value="ECO:0007669"/>
    <property type="project" value="UniProtKB-KW"/>
</dbReference>
<dbReference type="CDD" id="cd07340">
    <property type="entry name" value="M48B_Htpx_like"/>
    <property type="match status" value="1"/>
</dbReference>
<dbReference type="Gene3D" id="3.30.2010.10">
    <property type="entry name" value="Metalloproteases ('zincins'), catalytic domain"/>
    <property type="match status" value="1"/>
</dbReference>
<dbReference type="HAMAP" id="MF_00188">
    <property type="entry name" value="Pept_M48_protease_HtpX"/>
    <property type="match status" value="1"/>
</dbReference>
<dbReference type="InterPro" id="IPR050083">
    <property type="entry name" value="HtpX_protease"/>
</dbReference>
<dbReference type="InterPro" id="IPR022919">
    <property type="entry name" value="Pept_M48_protease_HtpX"/>
</dbReference>
<dbReference type="InterPro" id="IPR001915">
    <property type="entry name" value="Peptidase_M48"/>
</dbReference>
<dbReference type="NCBIfam" id="NF003425">
    <property type="entry name" value="PRK04897.1"/>
    <property type="match status" value="1"/>
</dbReference>
<dbReference type="PANTHER" id="PTHR43221">
    <property type="entry name" value="PROTEASE HTPX"/>
    <property type="match status" value="1"/>
</dbReference>
<dbReference type="PANTHER" id="PTHR43221:SF1">
    <property type="entry name" value="PROTEASE HTPX"/>
    <property type="match status" value="1"/>
</dbReference>
<dbReference type="Pfam" id="PF01435">
    <property type="entry name" value="Peptidase_M48"/>
    <property type="match status" value="1"/>
</dbReference>
<sequence length="299" mass="32805">MLFDQIASNKRKTWILLLVFFLLLALVGYAVGYLFIRSGLGGLVIALIIGFIYALSMIFQSTEIVMSMNGAREVDEQTAPDLYHVVEDMALVAQIPMPRVFIIDDPALNAFATGSNPQNAAVAATSGLLAIMNREELEAVMGHEVSHIRNYDIRISTIAVALASAITMLSSMAGRMMWWGGAGRRRSDDDRDGNGLEIIMLVVSLLAIVLAPLAATLVQLAISRQREFLADASSVELTRNPQGMINALDKLDNSKPMSRHVDDASSALYINDPKKGGGFQKLFYTHPPISERIERLKHM</sequence>
<proteinExistence type="inferred from homology"/>
<keyword id="KW-1003">Cell membrane</keyword>
<keyword id="KW-0378">Hydrolase</keyword>
<keyword id="KW-0472">Membrane</keyword>
<keyword id="KW-0479">Metal-binding</keyword>
<keyword id="KW-0482">Metalloprotease</keyword>
<keyword id="KW-0645">Protease</keyword>
<keyword id="KW-0812">Transmembrane</keyword>
<keyword id="KW-1133">Transmembrane helix</keyword>
<keyword id="KW-0862">Zinc</keyword>
<evidence type="ECO:0000255" key="1">
    <source>
        <dbReference type="HAMAP-Rule" id="MF_00188"/>
    </source>
</evidence>
<feature type="chain" id="PRO_1000098851" description="Protease HtpX homolog">
    <location>
        <begin position="1"/>
        <end position="299"/>
    </location>
</feature>
<feature type="transmembrane region" description="Helical" evidence="1">
    <location>
        <begin position="15"/>
        <end position="35"/>
    </location>
</feature>
<feature type="transmembrane region" description="Helical" evidence="1">
    <location>
        <begin position="39"/>
        <end position="59"/>
    </location>
</feature>
<feature type="transmembrane region" description="Helical" evidence="1">
    <location>
        <begin position="158"/>
        <end position="178"/>
    </location>
</feature>
<feature type="transmembrane region" description="Helical" evidence="1">
    <location>
        <begin position="198"/>
        <end position="218"/>
    </location>
</feature>
<feature type="active site" evidence="1">
    <location>
        <position position="144"/>
    </location>
</feature>
<feature type="binding site" evidence="1">
    <location>
        <position position="143"/>
    </location>
    <ligand>
        <name>Zn(2+)</name>
        <dbReference type="ChEBI" id="CHEBI:29105"/>
        <note>catalytic</note>
    </ligand>
</feature>
<feature type="binding site" evidence="1">
    <location>
        <position position="147"/>
    </location>
    <ligand>
        <name>Zn(2+)</name>
        <dbReference type="ChEBI" id="CHEBI:29105"/>
        <note>catalytic</note>
    </ligand>
</feature>
<feature type="binding site" evidence="1">
    <location>
        <position position="227"/>
    </location>
    <ligand>
        <name>Zn(2+)</name>
        <dbReference type="ChEBI" id="CHEBI:29105"/>
        <note>catalytic</note>
    </ligand>
</feature>
<organism>
    <name type="scientific">Streptococcus pneumoniae serotype 19F (strain G54)</name>
    <dbReference type="NCBI Taxonomy" id="512566"/>
    <lineage>
        <taxon>Bacteria</taxon>
        <taxon>Bacillati</taxon>
        <taxon>Bacillota</taxon>
        <taxon>Bacilli</taxon>
        <taxon>Lactobacillales</taxon>
        <taxon>Streptococcaceae</taxon>
        <taxon>Streptococcus</taxon>
    </lineage>
</organism>
<gene>
    <name evidence="1" type="primary">htpX</name>
    <name type="ordered locus">SPG_1177</name>
</gene>
<comment type="cofactor">
    <cofactor evidence="1">
        <name>Zn(2+)</name>
        <dbReference type="ChEBI" id="CHEBI:29105"/>
    </cofactor>
    <text evidence="1">Binds 1 zinc ion per subunit.</text>
</comment>
<comment type="subcellular location">
    <subcellularLocation>
        <location evidence="1">Cell membrane</location>
        <topology evidence="1">Multi-pass membrane protein</topology>
    </subcellularLocation>
</comment>
<comment type="similarity">
    <text evidence="1">Belongs to the peptidase M48B family.</text>
</comment>
<protein>
    <recommendedName>
        <fullName evidence="1">Protease HtpX homolog</fullName>
        <ecNumber evidence="1">3.4.24.-</ecNumber>
    </recommendedName>
</protein>
<accession>B5E520</accession>